<comment type="function">
    <text evidence="1">Catalyzes the isomerization between 2-isopropylmalate and 3-isopropylmalate, via the formation of 2-isopropylmaleate.</text>
</comment>
<comment type="catalytic activity">
    <reaction evidence="1">
        <text>(2R,3S)-3-isopropylmalate = (2S)-2-isopropylmalate</text>
        <dbReference type="Rhea" id="RHEA:32287"/>
        <dbReference type="ChEBI" id="CHEBI:1178"/>
        <dbReference type="ChEBI" id="CHEBI:35121"/>
        <dbReference type="EC" id="4.2.1.33"/>
    </reaction>
</comment>
<comment type="cofactor">
    <cofactor evidence="1">
        <name>[4Fe-4S] cluster</name>
        <dbReference type="ChEBI" id="CHEBI:49883"/>
    </cofactor>
    <text evidence="1">Binds 1 [4Fe-4S] cluster per subunit.</text>
</comment>
<comment type="pathway">
    <text evidence="1">Amino-acid biosynthesis; L-leucine biosynthesis; L-leucine from 3-methyl-2-oxobutanoate: step 2/4.</text>
</comment>
<comment type="subunit">
    <text evidence="1">Heterodimer of LeuC and LeuD.</text>
</comment>
<comment type="similarity">
    <text evidence="1">Belongs to the aconitase/IPM isomerase family. LeuC type 1 subfamily.</text>
</comment>
<name>LEUC_STAA2</name>
<accession>A6U3E4</accession>
<feature type="chain" id="PRO_1000084230" description="3-isopropylmalate dehydratase large subunit">
    <location>
        <begin position="1"/>
        <end position="456"/>
    </location>
</feature>
<feature type="binding site" evidence="1">
    <location>
        <position position="336"/>
    </location>
    <ligand>
        <name>[4Fe-4S] cluster</name>
        <dbReference type="ChEBI" id="CHEBI:49883"/>
    </ligand>
</feature>
<feature type="binding site" evidence="1">
    <location>
        <position position="396"/>
    </location>
    <ligand>
        <name>[4Fe-4S] cluster</name>
        <dbReference type="ChEBI" id="CHEBI:49883"/>
    </ligand>
</feature>
<feature type="binding site" evidence="1">
    <location>
        <position position="399"/>
    </location>
    <ligand>
        <name>[4Fe-4S] cluster</name>
        <dbReference type="ChEBI" id="CHEBI:49883"/>
    </ligand>
</feature>
<protein>
    <recommendedName>
        <fullName evidence="1">3-isopropylmalate dehydratase large subunit</fullName>
        <ecNumber evidence="1">4.2.1.33</ecNumber>
    </recommendedName>
    <alternativeName>
        <fullName evidence="1">Alpha-IPM isomerase</fullName>
        <shortName evidence="1">IPMI</shortName>
    </alternativeName>
    <alternativeName>
        <fullName evidence="1">Isopropylmalate isomerase</fullName>
    </alternativeName>
</protein>
<reference key="1">
    <citation type="submission" date="2007-06" db="EMBL/GenBank/DDBJ databases">
        <title>Complete sequence of chromosome of Staphylococcus aureus subsp. aureus JH1.</title>
        <authorList>
            <consortium name="US DOE Joint Genome Institute"/>
            <person name="Copeland A."/>
            <person name="Lucas S."/>
            <person name="Lapidus A."/>
            <person name="Barry K."/>
            <person name="Detter J.C."/>
            <person name="Glavina del Rio T."/>
            <person name="Hammon N."/>
            <person name="Israni S."/>
            <person name="Dalin E."/>
            <person name="Tice H."/>
            <person name="Pitluck S."/>
            <person name="Chain P."/>
            <person name="Malfatti S."/>
            <person name="Shin M."/>
            <person name="Vergez L."/>
            <person name="Schmutz J."/>
            <person name="Larimer F."/>
            <person name="Land M."/>
            <person name="Hauser L."/>
            <person name="Kyrpides N."/>
            <person name="Ivanova N."/>
            <person name="Tomasz A."/>
            <person name="Richardson P."/>
        </authorList>
    </citation>
    <scope>NUCLEOTIDE SEQUENCE [LARGE SCALE GENOMIC DNA]</scope>
    <source>
        <strain>JH1</strain>
    </source>
</reference>
<keyword id="KW-0004">4Fe-4S</keyword>
<keyword id="KW-0028">Amino-acid biosynthesis</keyword>
<keyword id="KW-0100">Branched-chain amino acid biosynthesis</keyword>
<keyword id="KW-0408">Iron</keyword>
<keyword id="KW-0411">Iron-sulfur</keyword>
<keyword id="KW-0432">Leucine biosynthesis</keyword>
<keyword id="KW-0456">Lyase</keyword>
<keyword id="KW-0479">Metal-binding</keyword>
<proteinExistence type="inferred from homology"/>
<gene>
    <name evidence="1" type="primary">leuC</name>
    <name type="ordered locus">SaurJH1_2133</name>
</gene>
<evidence type="ECO:0000255" key="1">
    <source>
        <dbReference type="HAMAP-Rule" id="MF_01026"/>
    </source>
</evidence>
<organism>
    <name type="scientific">Staphylococcus aureus (strain JH1)</name>
    <dbReference type="NCBI Taxonomy" id="359787"/>
    <lineage>
        <taxon>Bacteria</taxon>
        <taxon>Bacillati</taxon>
        <taxon>Bacillota</taxon>
        <taxon>Bacilli</taxon>
        <taxon>Bacillales</taxon>
        <taxon>Staphylococcaceae</taxon>
        <taxon>Staphylococcus</taxon>
    </lineage>
</organism>
<dbReference type="EC" id="4.2.1.33" evidence="1"/>
<dbReference type="EMBL" id="CP000736">
    <property type="protein sequence ID" value="ABR52962.1"/>
    <property type="molecule type" value="Genomic_DNA"/>
</dbReference>
<dbReference type="SMR" id="A6U3E4"/>
<dbReference type="KEGG" id="sah:SaurJH1_2133"/>
<dbReference type="HOGENOM" id="CLU_006714_3_4_9"/>
<dbReference type="UniPathway" id="UPA00048">
    <property type="reaction ID" value="UER00071"/>
</dbReference>
<dbReference type="GO" id="GO:0003861">
    <property type="term" value="F:3-isopropylmalate dehydratase activity"/>
    <property type="evidence" value="ECO:0007669"/>
    <property type="project" value="UniProtKB-UniRule"/>
</dbReference>
<dbReference type="GO" id="GO:0051539">
    <property type="term" value="F:4 iron, 4 sulfur cluster binding"/>
    <property type="evidence" value="ECO:0007669"/>
    <property type="project" value="UniProtKB-KW"/>
</dbReference>
<dbReference type="GO" id="GO:0046872">
    <property type="term" value="F:metal ion binding"/>
    <property type="evidence" value="ECO:0007669"/>
    <property type="project" value="UniProtKB-KW"/>
</dbReference>
<dbReference type="GO" id="GO:0009098">
    <property type="term" value="P:L-leucine biosynthetic process"/>
    <property type="evidence" value="ECO:0007669"/>
    <property type="project" value="UniProtKB-UniRule"/>
</dbReference>
<dbReference type="CDD" id="cd01583">
    <property type="entry name" value="IPMI"/>
    <property type="match status" value="1"/>
</dbReference>
<dbReference type="Gene3D" id="3.30.499.10">
    <property type="entry name" value="Aconitase, domain 3"/>
    <property type="match status" value="2"/>
</dbReference>
<dbReference type="HAMAP" id="MF_01026">
    <property type="entry name" value="LeuC_type1"/>
    <property type="match status" value="1"/>
</dbReference>
<dbReference type="InterPro" id="IPR004430">
    <property type="entry name" value="3-IsopropMal_deHydase_lsu"/>
</dbReference>
<dbReference type="InterPro" id="IPR015931">
    <property type="entry name" value="Acnase/IPM_dHydase_lsu_aba_1/3"/>
</dbReference>
<dbReference type="InterPro" id="IPR001030">
    <property type="entry name" value="Acoase/IPM_deHydtase_lsu_aba"/>
</dbReference>
<dbReference type="InterPro" id="IPR018136">
    <property type="entry name" value="Aconitase_4Fe-4S_BS"/>
</dbReference>
<dbReference type="InterPro" id="IPR036008">
    <property type="entry name" value="Aconitase_4Fe-4S_dom"/>
</dbReference>
<dbReference type="InterPro" id="IPR050067">
    <property type="entry name" value="IPM_dehydratase_rel_enz"/>
</dbReference>
<dbReference type="InterPro" id="IPR033941">
    <property type="entry name" value="IPMI_cat"/>
</dbReference>
<dbReference type="NCBIfam" id="TIGR00170">
    <property type="entry name" value="leuC"/>
    <property type="match status" value="1"/>
</dbReference>
<dbReference type="NCBIfam" id="NF004016">
    <property type="entry name" value="PRK05478.1"/>
    <property type="match status" value="1"/>
</dbReference>
<dbReference type="NCBIfam" id="NF009116">
    <property type="entry name" value="PRK12466.1"/>
    <property type="match status" value="1"/>
</dbReference>
<dbReference type="PANTHER" id="PTHR43822:SF9">
    <property type="entry name" value="3-ISOPROPYLMALATE DEHYDRATASE"/>
    <property type="match status" value="1"/>
</dbReference>
<dbReference type="PANTHER" id="PTHR43822">
    <property type="entry name" value="HOMOACONITASE, MITOCHONDRIAL-RELATED"/>
    <property type="match status" value="1"/>
</dbReference>
<dbReference type="Pfam" id="PF00330">
    <property type="entry name" value="Aconitase"/>
    <property type="match status" value="1"/>
</dbReference>
<dbReference type="PRINTS" id="PR00415">
    <property type="entry name" value="ACONITASE"/>
</dbReference>
<dbReference type="SUPFAM" id="SSF53732">
    <property type="entry name" value="Aconitase iron-sulfur domain"/>
    <property type="match status" value="1"/>
</dbReference>
<dbReference type="PROSITE" id="PS00450">
    <property type="entry name" value="ACONITASE_1"/>
    <property type="match status" value="1"/>
</dbReference>
<dbReference type="PROSITE" id="PS01244">
    <property type="entry name" value="ACONITASE_2"/>
    <property type="match status" value="1"/>
</dbReference>
<sequence>MGQTLFDKVWNRHVLYGKLGEPQLLYIDLHLIHEVTSPQAFEGLRLQNRKLRRPDLTFATLDHNVPTIDIFNIKDEIANKQITTLQKNAIDFGVHIFDMGSDEQGIVHMVGPETGLTQPGKTIVCGDSHTATHGAFGAIAFGIGTSEVEHVFATQTLWQTKPKNLKIDINGTLPTGVYAKDIILHLIKTYGVDFGTGYALEFTGETIKNLSMDGRMTICNMAIEGGAKYGIIQPDDITFEYVKGRPFADNFAKSVDKWRELYSDDDAIFDRVIELDVSTLEPQVTWGTNPEMGVNFSEPFPEINDINDQRAYDYMGLEPGQKAEDIDLGYVFLGSCTNARLSDLIEASHIVKGNKVHPNITAIVVPGSRTVKKEAEKLGLDTIFKNAGFEWREPGCSMCLGMNPDQVPEGVHCASTSNRNFEGRQGKGARTHLVSPAMAAAAAIHGKFVDVRKVVV</sequence>